<protein>
    <recommendedName>
        <fullName evidence="1">Nucleoid-associated protein SA0437</fullName>
    </recommendedName>
</protein>
<gene>
    <name type="ordered locus">SA0437</name>
</gene>
<sequence>MRGGGNMQQMMKQMQKMQKKMAQEQEKLKEERIVGTAGGGMVAVTVTGHKEVVDVEIKEEAVDPDDIEMLQDLVLAATNEAMNKADELTQERLGKHTQGLNIPGM</sequence>
<accession>P99126</accession>
<accession>Q99WC4</accession>
<reference key="1">
    <citation type="journal article" date="2001" name="Lancet">
        <title>Whole genome sequencing of meticillin-resistant Staphylococcus aureus.</title>
        <authorList>
            <person name="Kuroda M."/>
            <person name="Ohta T."/>
            <person name="Uchiyama I."/>
            <person name="Baba T."/>
            <person name="Yuzawa H."/>
            <person name="Kobayashi I."/>
            <person name="Cui L."/>
            <person name="Oguchi A."/>
            <person name="Aoki K."/>
            <person name="Nagai Y."/>
            <person name="Lian J.-Q."/>
            <person name="Ito T."/>
            <person name="Kanamori M."/>
            <person name="Matsumaru H."/>
            <person name="Maruyama A."/>
            <person name="Murakami H."/>
            <person name="Hosoyama A."/>
            <person name="Mizutani-Ui Y."/>
            <person name="Takahashi N.K."/>
            <person name="Sawano T."/>
            <person name="Inoue R."/>
            <person name="Kaito C."/>
            <person name="Sekimizu K."/>
            <person name="Hirakawa H."/>
            <person name="Kuhara S."/>
            <person name="Goto S."/>
            <person name="Yabuzaki J."/>
            <person name="Kanehisa M."/>
            <person name="Yamashita A."/>
            <person name="Oshima K."/>
            <person name="Furuya K."/>
            <person name="Yoshino C."/>
            <person name="Shiba T."/>
            <person name="Hattori M."/>
            <person name="Ogasawara N."/>
            <person name="Hayashi H."/>
            <person name="Hiramatsu K."/>
        </authorList>
    </citation>
    <scope>NUCLEOTIDE SEQUENCE [LARGE SCALE GENOMIC DNA]</scope>
    <source>
        <strain>N315</strain>
    </source>
</reference>
<reference key="2">
    <citation type="journal article" date="2005" name="J. Microbiol. Methods">
        <title>Correlation of proteomic and transcriptomic profiles of Staphylococcus aureus during the post-exponential phase of growth.</title>
        <authorList>
            <person name="Scherl A."/>
            <person name="Francois P."/>
            <person name="Bento M."/>
            <person name="Deshusses J.M."/>
            <person name="Charbonnier Y."/>
            <person name="Converset V."/>
            <person name="Huyghe A."/>
            <person name="Walter N."/>
            <person name="Hoogland C."/>
            <person name="Appel R.D."/>
            <person name="Sanchez J.-C."/>
            <person name="Zimmermann-Ivol C.G."/>
            <person name="Corthals G.L."/>
            <person name="Hochstrasser D.F."/>
            <person name="Schrenzel J."/>
        </authorList>
    </citation>
    <scope>IDENTIFICATION BY MASS SPECTROMETRY</scope>
    <source>
        <strain>N315</strain>
    </source>
</reference>
<reference key="3">
    <citation type="submission" date="2007-10" db="UniProtKB">
        <title>Shotgun proteomic analysis of total and membrane protein extracts of S. aureus strain N315.</title>
        <authorList>
            <person name="Vaezzadeh A.R."/>
            <person name="Deshusses J."/>
            <person name="Lescuyer P."/>
            <person name="Hochstrasser D.F."/>
        </authorList>
    </citation>
    <scope>IDENTIFICATION BY MASS SPECTROMETRY [LARGE SCALE ANALYSIS]</scope>
    <source>
        <strain>N315</strain>
    </source>
</reference>
<keyword id="KW-0963">Cytoplasm</keyword>
<keyword id="KW-0238">DNA-binding</keyword>
<dbReference type="EMBL" id="BA000018">
    <property type="protein sequence ID" value="BAB41667.1"/>
    <property type="molecule type" value="Genomic_DNA"/>
</dbReference>
<dbReference type="PIR" id="H89813">
    <property type="entry name" value="H89813"/>
</dbReference>
<dbReference type="RefSeq" id="WP_001213992.1">
    <property type="nucleotide sequence ID" value="NC_002745.2"/>
</dbReference>
<dbReference type="SMR" id="P99126"/>
<dbReference type="EnsemblBacteria" id="BAB41667">
    <property type="protein sequence ID" value="BAB41667"/>
    <property type="gene ID" value="BAB41667"/>
</dbReference>
<dbReference type="KEGG" id="sau:SA0437"/>
<dbReference type="HOGENOM" id="CLU_140930_1_0_9"/>
<dbReference type="GO" id="GO:0043590">
    <property type="term" value="C:bacterial nucleoid"/>
    <property type="evidence" value="ECO:0007669"/>
    <property type="project" value="UniProtKB-UniRule"/>
</dbReference>
<dbReference type="GO" id="GO:0005829">
    <property type="term" value="C:cytosol"/>
    <property type="evidence" value="ECO:0007669"/>
    <property type="project" value="TreeGrafter"/>
</dbReference>
<dbReference type="GO" id="GO:0003677">
    <property type="term" value="F:DNA binding"/>
    <property type="evidence" value="ECO:0007669"/>
    <property type="project" value="UniProtKB-UniRule"/>
</dbReference>
<dbReference type="FunFam" id="3.30.1310.10:FF:000002">
    <property type="entry name" value="Nucleoid-associated protein IKC_06587"/>
    <property type="match status" value="1"/>
</dbReference>
<dbReference type="Gene3D" id="3.30.1310.10">
    <property type="entry name" value="Nucleoid-associated protein YbaB-like domain"/>
    <property type="match status" value="1"/>
</dbReference>
<dbReference type="HAMAP" id="MF_00274">
    <property type="entry name" value="DNA_YbaB_EbfC"/>
    <property type="match status" value="1"/>
</dbReference>
<dbReference type="InterPro" id="IPR036894">
    <property type="entry name" value="YbaB-like_sf"/>
</dbReference>
<dbReference type="InterPro" id="IPR004401">
    <property type="entry name" value="YbaB/EbfC"/>
</dbReference>
<dbReference type="NCBIfam" id="TIGR00103">
    <property type="entry name" value="DNA_YbaB_EbfC"/>
    <property type="match status" value="1"/>
</dbReference>
<dbReference type="PANTHER" id="PTHR33449">
    <property type="entry name" value="NUCLEOID-ASSOCIATED PROTEIN YBAB"/>
    <property type="match status" value="1"/>
</dbReference>
<dbReference type="PANTHER" id="PTHR33449:SF1">
    <property type="entry name" value="NUCLEOID-ASSOCIATED PROTEIN YBAB"/>
    <property type="match status" value="1"/>
</dbReference>
<dbReference type="Pfam" id="PF02575">
    <property type="entry name" value="YbaB_DNA_bd"/>
    <property type="match status" value="1"/>
</dbReference>
<dbReference type="PIRSF" id="PIRSF004555">
    <property type="entry name" value="UCP004555"/>
    <property type="match status" value="1"/>
</dbReference>
<dbReference type="SUPFAM" id="SSF82607">
    <property type="entry name" value="YbaB-like"/>
    <property type="match status" value="1"/>
</dbReference>
<comment type="function">
    <text evidence="1">Binds to DNA and alters its conformation. May be involved in regulation of gene expression, nucleoid organization and DNA protection.</text>
</comment>
<comment type="subunit">
    <text evidence="1">Homodimer.</text>
</comment>
<comment type="subcellular location">
    <subcellularLocation>
        <location evidence="1">Cytoplasm</location>
        <location evidence="1">Nucleoid</location>
    </subcellularLocation>
</comment>
<comment type="similarity">
    <text evidence="1">Belongs to the YbaB/EbfC family.</text>
</comment>
<proteinExistence type="evidence at protein level"/>
<feature type="chain" id="PRO_0000170437" description="Nucleoid-associated protein SA0437">
    <location>
        <begin position="1"/>
        <end position="105"/>
    </location>
</feature>
<feature type="region of interest" description="Disordered" evidence="2">
    <location>
        <begin position="1"/>
        <end position="33"/>
    </location>
</feature>
<feature type="compositionally biased region" description="Low complexity" evidence="2">
    <location>
        <begin position="7"/>
        <end position="16"/>
    </location>
</feature>
<feature type="compositionally biased region" description="Basic and acidic residues" evidence="2">
    <location>
        <begin position="21"/>
        <end position="33"/>
    </location>
</feature>
<evidence type="ECO:0000255" key="1">
    <source>
        <dbReference type="HAMAP-Rule" id="MF_00274"/>
    </source>
</evidence>
<evidence type="ECO:0000256" key="2">
    <source>
        <dbReference type="SAM" id="MobiDB-lite"/>
    </source>
</evidence>
<organism>
    <name type="scientific">Staphylococcus aureus (strain N315)</name>
    <dbReference type="NCBI Taxonomy" id="158879"/>
    <lineage>
        <taxon>Bacteria</taxon>
        <taxon>Bacillati</taxon>
        <taxon>Bacillota</taxon>
        <taxon>Bacilli</taxon>
        <taxon>Bacillales</taxon>
        <taxon>Staphylococcaceae</taxon>
        <taxon>Staphylococcus</taxon>
    </lineage>
</organism>
<name>Y437_STAAN</name>